<evidence type="ECO:0000255" key="1"/>
<evidence type="ECO:0000255" key="2">
    <source>
        <dbReference type="PROSITE-ProRule" id="PRU10117"/>
    </source>
</evidence>
<evidence type="ECO:0000256" key="3">
    <source>
        <dbReference type="SAM" id="MobiDB-lite"/>
    </source>
</evidence>
<evidence type="ECO:0000269" key="4">
    <source>
    </source>
</evidence>
<evidence type="ECO:0000305" key="5"/>
<dbReference type="EC" id="2.3.3.16"/>
<dbReference type="EMBL" id="AY124377">
    <property type="protein sequence ID" value="AAM92490.1"/>
    <property type="molecule type" value="mRNA"/>
</dbReference>
<dbReference type="EMBL" id="AAFI02000003">
    <property type="protein sequence ID" value="EAL73165.1"/>
    <property type="molecule type" value="Genomic_DNA"/>
</dbReference>
<dbReference type="RefSeq" id="XP_647596.1">
    <property type="nucleotide sequence ID" value="XM_642504.1"/>
</dbReference>
<dbReference type="SMR" id="Q8MQU6"/>
<dbReference type="BioGRID" id="1241411">
    <property type="interactions" value="1"/>
</dbReference>
<dbReference type="FunCoup" id="Q8MQU6">
    <property type="interactions" value="169"/>
</dbReference>
<dbReference type="STRING" id="44689.Q8MQU6"/>
<dbReference type="PaxDb" id="44689-DDB0191110"/>
<dbReference type="EnsemblProtists" id="EAL73165">
    <property type="protein sequence ID" value="EAL73165"/>
    <property type="gene ID" value="DDB_G0267426"/>
</dbReference>
<dbReference type="GeneID" id="8616408"/>
<dbReference type="KEGG" id="ddi:DDB_G0267426"/>
<dbReference type="dictyBase" id="DDB_G0267426">
    <property type="gene designation" value="cshA"/>
</dbReference>
<dbReference type="VEuPathDB" id="AmoebaDB:DDB_G0267426"/>
<dbReference type="eggNOG" id="KOG2617">
    <property type="taxonomic scope" value="Eukaryota"/>
</dbReference>
<dbReference type="HOGENOM" id="CLU_025068_0_1_1"/>
<dbReference type="InParanoid" id="Q8MQU6"/>
<dbReference type="OMA" id="HWRQQML"/>
<dbReference type="PhylomeDB" id="Q8MQU6"/>
<dbReference type="UniPathway" id="UPA00223">
    <property type="reaction ID" value="UER00717"/>
</dbReference>
<dbReference type="PRO" id="PR:Q8MQU6"/>
<dbReference type="Proteomes" id="UP000002195">
    <property type="component" value="Chromosome 1"/>
</dbReference>
<dbReference type="GO" id="GO:0005759">
    <property type="term" value="C:mitochondrial matrix"/>
    <property type="evidence" value="ECO:0000318"/>
    <property type="project" value="GO_Central"/>
</dbReference>
<dbReference type="GO" id="GO:0005777">
    <property type="term" value="C:peroxisome"/>
    <property type="evidence" value="ECO:0000314"/>
    <property type="project" value="dictyBase"/>
</dbReference>
<dbReference type="GO" id="GO:0004108">
    <property type="term" value="F:citrate (Si)-synthase activity"/>
    <property type="evidence" value="ECO:0000314"/>
    <property type="project" value="dictyBase"/>
</dbReference>
<dbReference type="GO" id="GO:0019954">
    <property type="term" value="P:asexual reproduction"/>
    <property type="evidence" value="ECO:0000315"/>
    <property type="project" value="dictyBase"/>
</dbReference>
<dbReference type="GO" id="GO:0005975">
    <property type="term" value="P:carbohydrate metabolic process"/>
    <property type="evidence" value="ECO:0000318"/>
    <property type="project" value="GO_Central"/>
</dbReference>
<dbReference type="GO" id="GO:0006897">
    <property type="term" value="P:endocytosis"/>
    <property type="evidence" value="ECO:0000315"/>
    <property type="project" value="dictyBase"/>
</dbReference>
<dbReference type="GO" id="GO:0006097">
    <property type="term" value="P:glyoxylate cycle"/>
    <property type="evidence" value="ECO:0000304"/>
    <property type="project" value="dictyBase"/>
</dbReference>
<dbReference type="GO" id="GO:0006909">
    <property type="term" value="P:phagocytosis"/>
    <property type="evidence" value="ECO:0000315"/>
    <property type="project" value="dictyBase"/>
</dbReference>
<dbReference type="GO" id="GO:0006907">
    <property type="term" value="P:pinocytosis"/>
    <property type="evidence" value="ECO:0000315"/>
    <property type="project" value="dictyBase"/>
</dbReference>
<dbReference type="GO" id="GO:0050766">
    <property type="term" value="P:positive regulation of phagocytosis"/>
    <property type="evidence" value="ECO:0000315"/>
    <property type="project" value="dictyBase"/>
</dbReference>
<dbReference type="GO" id="GO:0031288">
    <property type="term" value="P:sorocarp morphogenesis"/>
    <property type="evidence" value="ECO:0000315"/>
    <property type="project" value="dictyBase"/>
</dbReference>
<dbReference type="GO" id="GO:0006099">
    <property type="term" value="P:tricarboxylic acid cycle"/>
    <property type="evidence" value="ECO:0000318"/>
    <property type="project" value="GO_Central"/>
</dbReference>
<dbReference type="FunFam" id="1.10.230.10:FF:000002">
    <property type="entry name" value="Citrate synthase"/>
    <property type="match status" value="1"/>
</dbReference>
<dbReference type="FunFam" id="1.10.580.10:FF:000005">
    <property type="entry name" value="Citrate synthase"/>
    <property type="match status" value="1"/>
</dbReference>
<dbReference type="Gene3D" id="1.10.580.10">
    <property type="entry name" value="Citrate Synthase, domain 1"/>
    <property type="match status" value="1"/>
</dbReference>
<dbReference type="Gene3D" id="1.10.230.10">
    <property type="entry name" value="Cytochrome P450-Terp, domain 2"/>
    <property type="match status" value="1"/>
</dbReference>
<dbReference type="InterPro" id="IPR016142">
    <property type="entry name" value="Citrate_synth-like_lrg_a-sub"/>
</dbReference>
<dbReference type="InterPro" id="IPR016143">
    <property type="entry name" value="Citrate_synth-like_sm_a-sub"/>
</dbReference>
<dbReference type="InterPro" id="IPR002020">
    <property type="entry name" value="Citrate_synthase"/>
</dbReference>
<dbReference type="InterPro" id="IPR019810">
    <property type="entry name" value="Citrate_synthase_AS"/>
</dbReference>
<dbReference type="InterPro" id="IPR036969">
    <property type="entry name" value="Citrate_synthase_sf"/>
</dbReference>
<dbReference type="InterPro" id="IPR010953">
    <property type="entry name" value="Citrate_synthase_typ-I"/>
</dbReference>
<dbReference type="NCBIfam" id="TIGR01798">
    <property type="entry name" value="cit_synth_I"/>
    <property type="match status" value="1"/>
</dbReference>
<dbReference type="NCBIfam" id="NF004126">
    <property type="entry name" value="PRK05614.1"/>
    <property type="match status" value="1"/>
</dbReference>
<dbReference type="PANTHER" id="PTHR42871">
    <property type="entry name" value="CITRATE SYNTHASE"/>
    <property type="match status" value="1"/>
</dbReference>
<dbReference type="PANTHER" id="PTHR42871:SF1">
    <property type="entry name" value="CITRATE SYNTHASE"/>
    <property type="match status" value="1"/>
</dbReference>
<dbReference type="Pfam" id="PF00285">
    <property type="entry name" value="Citrate_synt"/>
    <property type="match status" value="1"/>
</dbReference>
<dbReference type="PRINTS" id="PR00143">
    <property type="entry name" value="CITRTSNTHASE"/>
</dbReference>
<dbReference type="SUPFAM" id="SSF48256">
    <property type="entry name" value="Citrate synthase"/>
    <property type="match status" value="1"/>
</dbReference>
<dbReference type="PROSITE" id="PS00480">
    <property type="entry name" value="CITRATE_SYNTHASE"/>
    <property type="match status" value="1"/>
</dbReference>
<gene>
    <name type="primary">cshA</name>
    <name type="ORF">DDB_G0267426</name>
</gene>
<sequence length="492" mass="55749">MAHIDRINILANHLSKEEEEENELLTSPVSADKKKETVTVTDNRNGKSYDFKIKNDTINALNFKELQLAKGDGGLMIYDPGFQNTAVVTSYITYIDGDKGILRYRGYPIEELAERSNFLEVAYLLINGNLPNKSQLDGWSNKIMTHTFLHENLVGLMKTFRYDAHPMGMLISTVAALGTFYPEANPALAGGDIFKSENVRNKQIYRIVGKLPTIAACAWRHRIGRPYNTPVNHLGYTENFLYMLDKLSEPDYKPNPVLCRALEILFILHADHELNCSTAAMRHISSSGTDPYTSVAGAAGALYGPSHGGANEAVLDMLIHIGSKENIPQFISDVKSKKKKLMGFGHRIYKNYDPRAKIIRRVAYEVFESLGKEPLIEVATELEKQALEDEYFVSRKLYPNVDFYSGLIYKAMGFPTDMFPVLFTIPRAVGWLAHWVEHLEDPETKIYRPRQVYKGEWFRNYVPIDGRPPAKVRSQDSYSSATTKRYSKVTSH</sequence>
<proteinExistence type="evidence at transcript level"/>
<comment type="function">
    <text evidence="4">Peroxisomal protein involved in the cellular biosynthesis of citrate, and required primarily for cell growth and modulation of multicellular development.</text>
</comment>
<comment type="catalytic activity">
    <reaction evidence="2">
        <text>oxaloacetate + acetyl-CoA + H2O = citrate + CoA + H(+)</text>
        <dbReference type="Rhea" id="RHEA:16845"/>
        <dbReference type="ChEBI" id="CHEBI:15377"/>
        <dbReference type="ChEBI" id="CHEBI:15378"/>
        <dbReference type="ChEBI" id="CHEBI:16452"/>
        <dbReference type="ChEBI" id="CHEBI:16947"/>
        <dbReference type="ChEBI" id="CHEBI:57287"/>
        <dbReference type="ChEBI" id="CHEBI:57288"/>
        <dbReference type="EC" id="2.3.3.16"/>
    </reaction>
</comment>
<comment type="pathway">
    <text>Carbohydrate metabolism; tricarboxylic acid cycle; isocitrate from oxaloacetate: step 1/2.</text>
</comment>
<comment type="subcellular location">
    <subcellularLocation>
        <location evidence="4">Peroxisome</location>
    </subcellularLocation>
</comment>
<comment type="developmental stage">
    <text evidence="4">Maximally expressed during vegetative growth and gradually decreased through subsequent developmental stages.</text>
</comment>
<comment type="similarity">
    <text evidence="5">Belongs to the citrate synthase family.</text>
</comment>
<organism>
    <name type="scientific">Dictyostelium discoideum</name>
    <name type="common">Social amoeba</name>
    <dbReference type="NCBI Taxonomy" id="44689"/>
    <lineage>
        <taxon>Eukaryota</taxon>
        <taxon>Amoebozoa</taxon>
        <taxon>Evosea</taxon>
        <taxon>Eumycetozoa</taxon>
        <taxon>Dictyostelia</taxon>
        <taxon>Dictyosteliales</taxon>
        <taxon>Dictyosteliaceae</taxon>
        <taxon>Dictyostelium</taxon>
    </lineage>
</organism>
<protein>
    <recommendedName>
        <fullName>Citrate synthase, peroxisomal</fullName>
        <ecNumber>2.3.3.16</ecNumber>
    </recommendedName>
</protein>
<keyword id="KW-0576">Peroxisome</keyword>
<keyword id="KW-1185">Reference proteome</keyword>
<keyword id="KW-0808">Transferase</keyword>
<keyword id="KW-0809">Transit peptide</keyword>
<keyword id="KW-0816">Tricarboxylic acid cycle</keyword>
<accession>Q8MQU6</accession>
<accession>Q55FD7</accession>
<name>CISYP_DICDI</name>
<feature type="transit peptide" description="Peroxisome" evidence="1">
    <location>
        <begin position="1"/>
        <end status="unknown"/>
    </location>
</feature>
<feature type="chain" id="PRO_0000327837" description="Citrate synthase, peroxisomal">
    <location>
        <begin status="unknown"/>
        <end position="492"/>
    </location>
</feature>
<feature type="region of interest" description="Disordered" evidence="3">
    <location>
        <begin position="469"/>
        <end position="492"/>
    </location>
</feature>
<feature type="compositionally biased region" description="Polar residues" evidence="3">
    <location>
        <begin position="475"/>
        <end position="484"/>
    </location>
</feature>
<feature type="active site" evidence="2">
    <location>
        <position position="307"/>
    </location>
</feature>
<feature type="active site" evidence="2">
    <location>
        <position position="346"/>
    </location>
</feature>
<feature type="active site" evidence="2">
    <location>
        <position position="402"/>
    </location>
</feature>
<reference key="1">
    <citation type="journal article" date="2004" name="Mol. Microbiol.">
        <title>Disruption of the peroxisomal citrate synthase CshA affects cell growth and multicellular development in Dictyostelium discoideum.</title>
        <authorList>
            <person name="Huang Y.-C."/>
            <person name="Chen Y.-H."/>
            <person name="Lo S.-R."/>
            <person name="Liu C.-I."/>
            <person name="Wang C.-W."/>
            <person name="Chang W.-T."/>
        </authorList>
    </citation>
    <scope>NUCLEOTIDE SEQUENCE [GENOMIC DNA]</scope>
    <scope>FUNCTION</scope>
    <scope>SUBCELLULAR LOCATION</scope>
    <scope>DEVELOPMENTAL STAGE</scope>
    <source>
        <strain>AX2</strain>
    </source>
</reference>
<reference key="2">
    <citation type="journal article" date="2005" name="Nature">
        <title>The genome of the social amoeba Dictyostelium discoideum.</title>
        <authorList>
            <person name="Eichinger L."/>
            <person name="Pachebat J.A."/>
            <person name="Gloeckner G."/>
            <person name="Rajandream M.A."/>
            <person name="Sucgang R."/>
            <person name="Berriman M."/>
            <person name="Song J."/>
            <person name="Olsen R."/>
            <person name="Szafranski K."/>
            <person name="Xu Q."/>
            <person name="Tunggal B."/>
            <person name="Kummerfeld S."/>
            <person name="Madera M."/>
            <person name="Konfortov B.A."/>
            <person name="Rivero F."/>
            <person name="Bankier A.T."/>
            <person name="Lehmann R."/>
            <person name="Hamlin N."/>
            <person name="Davies R."/>
            <person name="Gaudet P."/>
            <person name="Fey P."/>
            <person name="Pilcher K."/>
            <person name="Chen G."/>
            <person name="Saunders D."/>
            <person name="Sodergren E.J."/>
            <person name="Davis P."/>
            <person name="Kerhornou A."/>
            <person name="Nie X."/>
            <person name="Hall N."/>
            <person name="Anjard C."/>
            <person name="Hemphill L."/>
            <person name="Bason N."/>
            <person name="Farbrother P."/>
            <person name="Desany B."/>
            <person name="Just E."/>
            <person name="Morio T."/>
            <person name="Rost R."/>
            <person name="Churcher C.M."/>
            <person name="Cooper J."/>
            <person name="Haydock S."/>
            <person name="van Driessche N."/>
            <person name="Cronin A."/>
            <person name="Goodhead I."/>
            <person name="Muzny D.M."/>
            <person name="Mourier T."/>
            <person name="Pain A."/>
            <person name="Lu M."/>
            <person name="Harper D."/>
            <person name="Lindsay R."/>
            <person name="Hauser H."/>
            <person name="James K.D."/>
            <person name="Quiles M."/>
            <person name="Madan Babu M."/>
            <person name="Saito T."/>
            <person name="Buchrieser C."/>
            <person name="Wardroper A."/>
            <person name="Felder M."/>
            <person name="Thangavelu M."/>
            <person name="Johnson D."/>
            <person name="Knights A."/>
            <person name="Loulseged H."/>
            <person name="Mungall K.L."/>
            <person name="Oliver K."/>
            <person name="Price C."/>
            <person name="Quail M.A."/>
            <person name="Urushihara H."/>
            <person name="Hernandez J."/>
            <person name="Rabbinowitsch E."/>
            <person name="Steffen D."/>
            <person name="Sanders M."/>
            <person name="Ma J."/>
            <person name="Kohara Y."/>
            <person name="Sharp S."/>
            <person name="Simmonds M.N."/>
            <person name="Spiegler S."/>
            <person name="Tivey A."/>
            <person name="Sugano S."/>
            <person name="White B."/>
            <person name="Walker D."/>
            <person name="Woodward J.R."/>
            <person name="Winckler T."/>
            <person name="Tanaka Y."/>
            <person name="Shaulsky G."/>
            <person name="Schleicher M."/>
            <person name="Weinstock G.M."/>
            <person name="Rosenthal A."/>
            <person name="Cox E.C."/>
            <person name="Chisholm R.L."/>
            <person name="Gibbs R.A."/>
            <person name="Loomis W.F."/>
            <person name="Platzer M."/>
            <person name="Kay R.R."/>
            <person name="Williams J.G."/>
            <person name="Dear P.H."/>
            <person name="Noegel A.A."/>
            <person name="Barrell B.G."/>
            <person name="Kuspa A."/>
        </authorList>
    </citation>
    <scope>NUCLEOTIDE SEQUENCE [LARGE SCALE GENOMIC DNA]</scope>
    <source>
        <strain>AX4</strain>
    </source>
</reference>